<protein>
    <recommendedName>
        <fullName evidence="8">AA9 family lytic polysaccharide monooxygenase A</fullName>
        <shortName evidence="8">LPMO9A</shortName>
        <ecNumber evidence="10">1.14.99.56</ecNumber>
    </recommendedName>
    <alternativeName>
        <fullName evidence="9">Cellulase LPMO9A</fullName>
    </alternativeName>
    <alternativeName>
        <fullName evidence="9">Endo-beta-1,4-glucanase LPMO9A</fullName>
        <shortName evidence="9">Endoglucanase LPMO9A</shortName>
    </alternativeName>
    <alternativeName>
        <fullName evidence="9">Glycosyl hydrolase 61 family protein LPMO9A</fullName>
    </alternativeName>
</protein>
<proteinExistence type="evidence at transcript level"/>
<gene>
    <name evidence="8" type="primary">LPMO9A</name>
    <name type="ORF">AN2388</name>
    <name type="ORF">ANIA_02388</name>
</gene>
<comment type="function">
    <text evidence="10">Lytic polysaccharide monooxygenase (LPMO) that depolymerizes crystalline and amorphous polysaccharides via the oxidation of scissile alpha- or beta-(1-4)-glycosidic bonds, yielding C4 oxidation products (Probable). Catalysis by LPMOs requires the reduction of the active-site copper from Cu(II) to Cu(I) by a reducing agent and H(2)O(2) or O(2) as a cosubstrate (Probable).</text>
</comment>
<comment type="catalytic activity">
    <reaction evidence="10">
        <text>[(1-&gt;4)-beta-D-glucosyl]n+m + reduced acceptor + O2 = 4-dehydro-beta-D-glucosyl-[(1-&gt;4)-beta-D-glucosyl]n-1 + [(1-&gt;4)-beta-D-glucosyl]m + acceptor + H2O.</text>
        <dbReference type="EC" id="1.14.99.56"/>
    </reaction>
</comment>
<comment type="cofactor">
    <cofactor evidence="1">
        <name>Cu(2+)</name>
        <dbReference type="ChEBI" id="CHEBI:29036"/>
    </cofactor>
    <text evidence="1">Binds 1 copper ion per subunit.</text>
</comment>
<comment type="subcellular location">
    <subcellularLocation>
        <location evidence="6 7">Secreted</location>
    </subcellularLocation>
</comment>
<comment type="induction">
    <text evidence="5 7">Expression is significantly induced by pectin (PubMed:27075737). Expression is also moderately induced by cellulose (PubMed:27075737). Expression is induced on lignocellulose, such as steam-exploded sugarcane bagasse (SCB) (PubMed:35658600). Remarkably, expression is also slightly induced by glucose (PubMed:35658600). The promoter contains the consensus sequence for xlnR binding sites (5'-GGCTAA/G-3') (PubMed:27075737).</text>
</comment>
<comment type="biotechnology">
    <text evidence="10">Lignocellulose is the most abundant polymeric composite on Earth and is a recalcitrant but promising renewable substrate for industrial biotechnology applications. Together with cellobiose dehydrogenases (CDHs) an enzymatic system capable of oxidative cellulose cleavage is formed, which increases the efficiency of cellulases and put LPMOs at focus of biofuel research.</text>
</comment>
<comment type="similarity">
    <text evidence="9">Belongs to the polysaccharide monooxygenase AA9 family.</text>
</comment>
<dbReference type="EC" id="1.14.99.56" evidence="10"/>
<dbReference type="EMBL" id="BN001307">
    <property type="protein sequence ID" value="CBF86741.1"/>
    <property type="molecule type" value="Genomic_DNA"/>
</dbReference>
<dbReference type="RefSeq" id="XP_659992.1">
    <property type="nucleotide sequence ID" value="XM_654900.1"/>
</dbReference>
<dbReference type="SMR" id="Q5BAP2"/>
<dbReference type="STRING" id="227321.Q5BAP2"/>
<dbReference type="CAZy" id="AA9">
    <property type="family name" value="Auxiliary Activities 9"/>
</dbReference>
<dbReference type="EnsemblFungi" id="CBF86741">
    <property type="protein sequence ID" value="CBF86741"/>
    <property type="gene ID" value="ANIA_02388"/>
</dbReference>
<dbReference type="GeneID" id="2875438"/>
<dbReference type="KEGG" id="ani:ANIA_02388"/>
<dbReference type="eggNOG" id="ENOG502SM9C">
    <property type="taxonomic scope" value="Eukaryota"/>
</dbReference>
<dbReference type="HOGENOM" id="CLU_031730_3_1_1"/>
<dbReference type="InParanoid" id="Q5BAP2"/>
<dbReference type="OMA" id="ANWCGKP"/>
<dbReference type="OrthoDB" id="5985073at2759"/>
<dbReference type="Proteomes" id="UP000000560">
    <property type="component" value="Chromosome VII"/>
</dbReference>
<dbReference type="GO" id="GO:0005576">
    <property type="term" value="C:extracellular region"/>
    <property type="evidence" value="ECO:0007669"/>
    <property type="project" value="UniProtKB-SubCell"/>
</dbReference>
<dbReference type="GO" id="GO:0046872">
    <property type="term" value="F:metal ion binding"/>
    <property type="evidence" value="ECO:0007669"/>
    <property type="project" value="UniProtKB-KW"/>
</dbReference>
<dbReference type="GO" id="GO:0004497">
    <property type="term" value="F:monooxygenase activity"/>
    <property type="evidence" value="ECO:0007669"/>
    <property type="project" value="UniProtKB-KW"/>
</dbReference>
<dbReference type="GO" id="GO:0030245">
    <property type="term" value="P:cellulose catabolic process"/>
    <property type="evidence" value="ECO:0007669"/>
    <property type="project" value="UniProtKB-KW"/>
</dbReference>
<dbReference type="CDD" id="cd21175">
    <property type="entry name" value="LPMO_AA9"/>
    <property type="match status" value="1"/>
</dbReference>
<dbReference type="Gene3D" id="2.70.50.70">
    <property type="match status" value="1"/>
</dbReference>
<dbReference type="InterPro" id="IPR049892">
    <property type="entry name" value="AA9"/>
</dbReference>
<dbReference type="InterPro" id="IPR005103">
    <property type="entry name" value="AA9_LPMO"/>
</dbReference>
<dbReference type="PANTHER" id="PTHR33353:SF32">
    <property type="entry name" value="ENDO-BETA-1,4-GLUCANASE D"/>
    <property type="match status" value="1"/>
</dbReference>
<dbReference type="PANTHER" id="PTHR33353">
    <property type="entry name" value="PUTATIVE (AFU_ORTHOLOGUE AFUA_1G12560)-RELATED"/>
    <property type="match status" value="1"/>
</dbReference>
<dbReference type="Pfam" id="PF03443">
    <property type="entry name" value="AA9"/>
    <property type="match status" value="1"/>
</dbReference>
<evidence type="ECO:0000250" key="1">
    <source>
        <dbReference type="UniProtKB" id="Q1K8B6"/>
    </source>
</evidence>
<evidence type="ECO:0000255" key="2"/>
<evidence type="ECO:0000255" key="3">
    <source>
        <dbReference type="PROSITE-ProRule" id="PRU00498"/>
    </source>
</evidence>
<evidence type="ECO:0000256" key="4">
    <source>
        <dbReference type="SAM" id="MobiDB-lite"/>
    </source>
</evidence>
<evidence type="ECO:0000269" key="5">
    <source>
    </source>
</evidence>
<evidence type="ECO:0000269" key="6">
    <source>
    </source>
</evidence>
<evidence type="ECO:0000269" key="7">
    <source>
    </source>
</evidence>
<evidence type="ECO:0000303" key="8">
    <source>
    </source>
</evidence>
<evidence type="ECO:0000305" key="9"/>
<evidence type="ECO:0000305" key="10">
    <source>
    </source>
</evidence>
<name>LP9A_EMENI</name>
<reference key="1">
    <citation type="journal article" date="2005" name="Nature">
        <title>Sequencing of Aspergillus nidulans and comparative analysis with A. fumigatus and A. oryzae.</title>
        <authorList>
            <person name="Galagan J.E."/>
            <person name="Calvo S.E."/>
            <person name="Cuomo C."/>
            <person name="Ma L.-J."/>
            <person name="Wortman J.R."/>
            <person name="Batzoglou S."/>
            <person name="Lee S.-I."/>
            <person name="Bastuerkmen M."/>
            <person name="Spevak C.C."/>
            <person name="Clutterbuck J."/>
            <person name="Kapitonov V."/>
            <person name="Jurka J."/>
            <person name="Scazzocchio C."/>
            <person name="Farman M.L."/>
            <person name="Butler J."/>
            <person name="Purcell S."/>
            <person name="Harris S."/>
            <person name="Braus G.H."/>
            <person name="Draht O."/>
            <person name="Busch S."/>
            <person name="D'Enfert C."/>
            <person name="Bouchier C."/>
            <person name="Goldman G.H."/>
            <person name="Bell-Pedersen D."/>
            <person name="Griffiths-Jones S."/>
            <person name="Doonan J.H."/>
            <person name="Yu J."/>
            <person name="Vienken K."/>
            <person name="Pain A."/>
            <person name="Freitag M."/>
            <person name="Selker E.U."/>
            <person name="Archer D.B."/>
            <person name="Penalva M.A."/>
            <person name="Oakley B.R."/>
            <person name="Momany M."/>
            <person name="Tanaka T."/>
            <person name="Kumagai T."/>
            <person name="Asai K."/>
            <person name="Machida M."/>
            <person name="Nierman W.C."/>
            <person name="Denning D.W."/>
            <person name="Caddick M.X."/>
            <person name="Hynes M."/>
            <person name="Paoletti M."/>
            <person name="Fischer R."/>
            <person name="Miller B.L."/>
            <person name="Dyer P.S."/>
            <person name="Sachs M.S."/>
            <person name="Osmani S.A."/>
            <person name="Birren B.W."/>
        </authorList>
    </citation>
    <scope>NUCLEOTIDE SEQUENCE [LARGE SCALE GENOMIC DNA]</scope>
    <source>
        <strain>FGSC A4 / ATCC 38163 / CBS 112.46 / NRRL 194 / M139</strain>
    </source>
</reference>
<reference key="2">
    <citation type="journal article" date="2009" name="Fungal Genet. Biol.">
        <title>The 2008 update of the Aspergillus nidulans genome annotation: a community effort.</title>
        <authorList>
            <person name="Wortman J.R."/>
            <person name="Gilsenan J.M."/>
            <person name="Joardar V."/>
            <person name="Deegan J."/>
            <person name="Clutterbuck J."/>
            <person name="Andersen M.R."/>
            <person name="Archer D."/>
            <person name="Bencina M."/>
            <person name="Braus G."/>
            <person name="Coutinho P."/>
            <person name="von Dohren H."/>
            <person name="Doonan J."/>
            <person name="Driessen A.J."/>
            <person name="Durek P."/>
            <person name="Espeso E."/>
            <person name="Fekete E."/>
            <person name="Flipphi M."/>
            <person name="Estrada C.G."/>
            <person name="Geysens S."/>
            <person name="Goldman G."/>
            <person name="de Groot P.W."/>
            <person name="Hansen K."/>
            <person name="Harris S.D."/>
            <person name="Heinekamp T."/>
            <person name="Helmstaedt K."/>
            <person name="Henrissat B."/>
            <person name="Hofmann G."/>
            <person name="Homan T."/>
            <person name="Horio T."/>
            <person name="Horiuchi H."/>
            <person name="James S."/>
            <person name="Jones M."/>
            <person name="Karaffa L."/>
            <person name="Karanyi Z."/>
            <person name="Kato M."/>
            <person name="Keller N."/>
            <person name="Kelly D.E."/>
            <person name="Kiel J.A."/>
            <person name="Kim J.M."/>
            <person name="van der Klei I.J."/>
            <person name="Klis F.M."/>
            <person name="Kovalchuk A."/>
            <person name="Krasevec N."/>
            <person name="Kubicek C.P."/>
            <person name="Liu B."/>
            <person name="Maccabe A."/>
            <person name="Meyer V."/>
            <person name="Mirabito P."/>
            <person name="Miskei M."/>
            <person name="Mos M."/>
            <person name="Mullins J."/>
            <person name="Nelson D.R."/>
            <person name="Nielsen J."/>
            <person name="Oakley B.R."/>
            <person name="Osmani S.A."/>
            <person name="Pakula T."/>
            <person name="Paszewski A."/>
            <person name="Paulsen I."/>
            <person name="Pilsyk S."/>
            <person name="Pocsi I."/>
            <person name="Punt P.J."/>
            <person name="Ram A.F."/>
            <person name="Ren Q."/>
            <person name="Robellet X."/>
            <person name="Robson G."/>
            <person name="Seiboth B."/>
            <person name="van Solingen P."/>
            <person name="Specht T."/>
            <person name="Sun J."/>
            <person name="Taheri-Talesh N."/>
            <person name="Takeshita N."/>
            <person name="Ussery D."/>
            <person name="vanKuyk P.A."/>
            <person name="Visser H."/>
            <person name="van de Vondervoort P.J."/>
            <person name="de Vries R.P."/>
            <person name="Walton J."/>
            <person name="Xiang X."/>
            <person name="Xiong Y."/>
            <person name="Zeng A.P."/>
            <person name="Brandt B.W."/>
            <person name="Cornell M.J."/>
            <person name="van den Hondel C.A."/>
            <person name="Visser J."/>
            <person name="Oliver S.G."/>
            <person name="Turner G."/>
        </authorList>
    </citation>
    <scope>GENOME REANNOTATION</scope>
    <source>
        <strain>FGSC A4 / ATCC 38163 / CBS 112.46 / NRRL 194 / M139</strain>
    </source>
</reference>
<reference key="3">
    <citation type="journal article" date="2016" name="Appl. Microbiol. Biotechnol.">
        <title>A family of AA9 lytic polysaccharide monooxygenases in Aspergillus nidulans is differentially regulated by multiple substrates and at least one is active on cellulose and xyloglucan.</title>
        <authorList>
            <person name="Jagadeeswaran G."/>
            <person name="Gainey L."/>
            <person name="Prade R."/>
            <person name="Mort A.J."/>
        </authorList>
    </citation>
    <scope>FUNCTION</scope>
    <scope>INDUCTION</scope>
    <scope>BIOTECHNOLOGY</scope>
</reference>
<reference key="4">
    <citation type="journal article" date="2016" name="Biotechnol. Biofuels">
        <title>Lytic polysaccharide monooxygenases and other oxidative enzymes are abundantly secreted by Aspergillus nidulans grown on different starches.</title>
        <authorList>
            <person name="Nekiunaite L."/>
            <person name="Arntzen M.O."/>
            <person name="Svensson B."/>
            <person name="Vaaje-Kolstad G."/>
            <person name="Abou Hachem M."/>
        </authorList>
    </citation>
    <scope>IDENTIFICATION</scope>
    <scope>SUBCELLULAR LOCATION</scope>
</reference>
<reference key="5">
    <citation type="journal article" date="2022" name="Microbiol. Spectr.">
        <title>Deletion of AA9 Lytic Polysaccharide Monooxygenases Impacts A. nidulans Secretome and Growth on Lignocellulose.</title>
        <authorList>
            <person name="Terrasan C.R.F."/>
            <person name="Rubio M.V."/>
            <person name="Gerhardt J.A."/>
            <person name="Cairo J.P.F."/>
            <person name="Contesini F.J."/>
            <person name="Zubieta M.P."/>
            <person name="Figueiredo F.L."/>
            <person name="Valadares F.L."/>
            <person name="Correa T.L.R."/>
            <person name="Murakami M.T."/>
            <person name="Franco T.T."/>
            <person name="Davies G.J."/>
            <person name="Walton P.H."/>
            <person name="Damasio A."/>
        </authorList>
    </citation>
    <scope>FUNCTION</scope>
    <scope>SUBCELLULAR LOCATION</scope>
    <scope>INDUCTION</scope>
</reference>
<accession>Q5BAP2</accession>
<accession>C8VNP4</accession>
<keyword id="KW-0119">Carbohydrate metabolism</keyword>
<keyword id="KW-0136">Cellulose degradation</keyword>
<keyword id="KW-0186">Copper</keyword>
<keyword id="KW-1015">Disulfide bond</keyword>
<keyword id="KW-0325">Glycoprotein</keyword>
<keyword id="KW-0479">Metal-binding</keyword>
<keyword id="KW-0503">Monooxygenase</keyword>
<keyword id="KW-0560">Oxidoreductase</keyword>
<keyword id="KW-0624">Polysaccharide degradation</keyword>
<keyword id="KW-1185">Reference proteome</keyword>
<keyword id="KW-0964">Secreted</keyword>
<keyword id="KW-0732">Signal</keyword>
<organism>
    <name type="scientific">Emericella nidulans (strain FGSC A4 / ATCC 38163 / CBS 112.46 / NRRL 194 / M139)</name>
    <name type="common">Aspergillus nidulans</name>
    <dbReference type="NCBI Taxonomy" id="227321"/>
    <lineage>
        <taxon>Eukaryota</taxon>
        <taxon>Fungi</taxon>
        <taxon>Dikarya</taxon>
        <taxon>Ascomycota</taxon>
        <taxon>Pezizomycotina</taxon>
        <taxon>Eurotiomycetes</taxon>
        <taxon>Eurotiomycetidae</taxon>
        <taxon>Eurotiales</taxon>
        <taxon>Aspergillaceae</taxon>
        <taxon>Aspergillus</taxon>
        <taxon>Aspergillus subgen. Nidulantes</taxon>
    </lineage>
</organism>
<feature type="signal peptide" evidence="2">
    <location>
        <begin position="1"/>
        <end position="16"/>
    </location>
</feature>
<feature type="chain" id="PRO_5010328446" description="AA9 family lytic polysaccharide monooxygenase A">
    <location>
        <begin position="17"/>
        <end position="569"/>
    </location>
</feature>
<feature type="region of interest" description="Disordered" evidence="4">
    <location>
        <begin position="399"/>
        <end position="439"/>
    </location>
</feature>
<feature type="compositionally biased region" description="Low complexity" evidence="4">
    <location>
        <begin position="399"/>
        <end position="424"/>
    </location>
</feature>
<feature type="binding site" evidence="1">
    <location>
        <position position="17"/>
    </location>
    <ligand>
        <name>Cu(2+)</name>
        <dbReference type="ChEBI" id="CHEBI:29036"/>
        <note>catalytic</note>
    </ligand>
</feature>
<feature type="binding site" evidence="1">
    <location>
        <position position="99"/>
    </location>
    <ligand>
        <name>Cu(2+)</name>
        <dbReference type="ChEBI" id="CHEBI:29036"/>
        <note>catalytic</note>
    </ligand>
</feature>
<feature type="binding site" evidence="1">
    <location>
        <position position="174"/>
    </location>
    <ligand>
        <name>O2</name>
        <dbReference type="ChEBI" id="CHEBI:15379"/>
    </ligand>
</feature>
<feature type="binding site" evidence="1">
    <location>
        <position position="184"/>
    </location>
    <ligand>
        <name>O2</name>
        <dbReference type="ChEBI" id="CHEBI:15379"/>
    </ligand>
</feature>
<feature type="binding site" evidence="1">
    <location>
        <position position="186"/>
    </location>
    <ligand>
        <name>Cu(2+)</name>
        <dbReference type="ChEBI" id="CHEBI:29036"/>
        <note>catalytic</note>
    </ligand>
</feature>
<feature type="glycosylation site" description="N-linked (GlcNAc...) asparagine" evidence="3">
    <location>
        <position position="112"/>
    </location>
</feature>
<feature type="glycosylation site" description="N-linked (GlcNAc...) asparagine" evidence="3">
    <location>
        <position position="244"/>
    </location>
</feature>
<feature type="glycosylation site" description="N-linked (GlcNAc...) asparagine" evidence="3">
    <location>
        <position position="381"/>
    </location>
</feature>
<feature type="glycosylation site" description="N-linked (GlcNAc...) asparagine" evidence="3">
    <location>
        <position position="472"/>
    </location>
</feature>
<feature type="disulfide bond" evidence="1">
    <location>
        <begin position="59"/>
        <end position="189"/>
    </location>
</feature>
<sequence>MRIFSLALGFLPLVAGHTLMTTLYVDGENQGDGVCIRMNRNAEKATFPISPLANDAMACGYDGEIAAARTCAVSQSSTLTFEFRAYPDGSQPGSIDGSHKGPCAVYMKPVANATSDNNAAGDGWFKIYELDYDSSTSQWCTEKLIANNGFLSVQIPEGLRGGDYLVRTELLALHAAQDSPPDPQFYVGCAQVFLEGSESGDVPEGVVIDASTYSLDVPGLTYNIYTEPLELPYPSFGPSVYQPNASASTENAKVSGTQATQKDGLQPEGCILVRDDWCGYEVSSYSDEAGCWAECWTQADECWGTYLPTGNKNCQIWQDKCTEIDTQCSAGNWNGPPNKGKVLTPELEGVGGSMKVFSGGVSSADSEGSGSGIDEAETEMNTSQGAAFTSTPAAETAVAADATATATATTEDAEATTAAEAAATSGAGRPGRGHGHGRGPEVYADITVYDDNDHLSNIRPVISCCKVNLGPNDSFLRAARFAPIFSGSHGLRIDYSDTHYWLIAWPVNVVSFDQCLPQPQGSAPETSRTAIHLFAFSRAALSPYTCYLHLHIIEFTISAAFDQNDAEES</sequence>